<reference key="1">
    <citation type="journal article" date="2009" name="J. Bacteriol.">
        <title>Genome sequences of three Agrobacterium biovars help elucidate the evolution of multichromosome genomes in bacteria.</title>
        <authorList>
            <person name="Slater S.C."/>
            <person name="Goldman B.S."/>
            <person name="Goodner B."/>
            <person name="Setubal J.C."/>
            <person name="Farrand S.K."/>
            <person name="Nester E.W."/>
            <person name="Burr T.J."/>
            <person name="Banta L."/>
            <person name="Dickerman A.W."/>
            <person name="Paulsen I."/>
            <person name="Otten L."/>
            <person name="Suen G."/>
            <person name="Welch R."/>
            <person name="Almeida N.F."/>
            <person name="Arnold F."/>
            <person name="Burton O.T."/>
            <person name="Du Z."/>
            <person name="Ewing A."/>
            <person name="Godsy E."/>
            <person name="Heisel S."/>
            <person name="Houmiel K.L."/>
            <person name="Jhaveri J."/>
            <person name="Lu J."/>
            <person name="Miller N.M."/>
            <person name="Norton S."/>
            <person name="Chen Q."/>
            <person name="Phoolcharoen W."/>
            <person name="Ohlin V."/>
            <person name="Ondrusek D."/>
            <person name="Pride N."/>
            <person name="Stricklin S.L."/>
            <person name="Sun J."/>
            <person name="Wheeler C."/>
            <person name="Wilson L."/>
            <person name="Zhu H."/>
            <person name="Wood D.W."/>
        </authorList>
    </citation>
    <scope>NUCLEOTIDE SEQUENCE [LARGE SCALE GENOMIC DNA]</scope>
    <source>
        <strain>K84 / ATCC BAA-868</strain>
    </source>
</reference>
<evidence type="ECO:0000255" key="1">
    <source>
        <dbReference type="HAMAP-Rule" id="MF_00139"/>
    </source>
</evidence>
<evidence type="ECO:0000255" key="2">
    <source>
        <dbReference type="PROSITE-ProRule" id="PRU01202"/>
    </source>
</evidence>
<name>PUR9_RHIR8</name>
<gene>
    <name evidence="1" type="primary">purH</name>
    <name type="ordered locus">Arad_4926</name>
</gene>
<comment type="catalytic activity">
    <reaction evidence="1">
        <text>(6R)-10-formyltetrahydrofolate + 5-amino-1-(5-phospho-beta-D-ribosyl)imidazole-4-carboxamide = 5-formamido-1-(5-phospho-D-ribosyl)imidazole-4-carboxamide + (6S)-5,6,7,8-tetrahydrofolate</text>
        <dbReference type="Rhea" id="RHEA:22192"/>
        <dbReference type="ChEBI" id="CHEBI:57453"/>
        <dbReference type="ChEBI" id="CHEBI:58467"/>
        <dbReference type="ChEBI" id="CHEBI:58475"/>
        <dbReference type="ChEBI" id="CHEBI:195366"/>
        <dbReference type="EC" id="2.1.2.3"/>
    </reaction>
</comment>
<comment type="catalytic activity">
    <reaction evidence="1">
        <text>IMP + H2O = 5-formamido-1-(5-phospho-D-ribosyl)imidazole-4-carboxamide</text>
        <dbReference type="Rhea" id="RHEA:18445"/>
        <dbReference type="ChEBI" id="CHEBI:15377"/>
        <dbReference type="ChEBI" id="CHEBI:58053"/>
        <dbReference type="ChEBI" id="CHEBI:58467"/>
        <dbReference type="EC" id="3.5.4.10"/>
    </reaction>
</comment>
<comment type="pathway">
    <text evidence="1">Purine metabolism; IMP biosynthesis via de novo pathway; 5-formamido-1-(5-phospho-D-ribosyl)imidazole-4-carboxamide from 5-amino-1-(5-phospho-D-ribosyl)imidazole-4-carboxamide (10-formyl THF route): step 1/1.</text>
</comment>
<comment type="pathway">
    <text evidence="1">Purine metabolism; IMP biosynthesis via de novo pathway; IMP from 5-formamido-1-(5-phospho-D-ribosyl)imidazole-4-carboxamide: step 1/1.</text>
</comment>
<comment type="domain">
    <text evidence="1">The IMP cyclohydrolase activity resides in the N-terminal region.</text>
</comment>
<comment type="similarity">
    <text evidence="1">Belongs to the PurH family.</text>
</comment>
<feature type="chain" id="PRO_1000122941" description="Bifunctional purine biosynthesis protein PurH">
    <location>
        <begin position="1"/>
        <end position="538"/>
    </location>
</feature>
<feature type="domain" description="MGS-like" evidence="2">
    <location>
        <begin position="8"/>
        <end position="158"/>
    </location>
</feature>
<organism>
    <name type="scientific">Rhizobium rhizogenes (strain K84 / ATCC BAA-868)</name>
    <name type="common">Agrobacterium radiobacter</name>
    <dbReference type="NCBI Taxonomy" id="311403"/>
    <lineage>
        <taxon>Bacteria</taxon>
        <taxon>Pseudomonadati</taxon>
        <taxon>Pseudomonadota</taxon>
        <taxon>Alphaproteobacteria</taxon>
        <taxon>Hyphomicrobiales</taxon>
        <taxon>Rhizobiaceae</taxon>
        <taxon>Rhizobium/Agrobacterium group</taxon>
        <taxon>Rhizobium</taxon>
    </lineage>
</organism>
<keyword id="KW-0378">Hydrolase</keyword>
<keyword id="KW-0511">Multifunctional enzyme</keyword>
<keyword id="KW-0658">Purine biosynthesis</keyword>
<keyword id="KW-0808">Transferase</keyword>
<proteinExistence type="inferred from homology"/>
<dbReference type="EC" id="2.1.2.3" evidence="1"/>
<dbReference type="EC" id="3.5.4.10" evidence="1"/>
<dbReference type="EMBL" id="CP000628">
    <property type="protein sequence ID" value="ACM28518.1"/>
    <property type="molecule type" value="Genomic_DNA"/>
</dbReference>
<dbReference type="RefSeq" id="WP_012652993.1">
    <property type="nucleotide sequence ID" value="NC_011985.1"/>
</dbReference>
<dbReference type="SMR" id="B9JEU9"/>
<dbReference type="STRING" id="311403.Arad_4926"/>
<dbReference type="KEGG" id="ara:Arad_4926"/>
<dbReference type="eggNOG" id="COG0138">
    <property type="taxonomic scope" value="Bacteria"/>
</dbReference>
<dbReference type="HOGENOM" id="CLU_016316_5_2_5"/>
<dbReference type="UniPathway" id="UPA00074">
    <property type="reaction ID" value="UER00133"/>
</dbReference>
<dbReference type="UniPathway" id="UPA00074">
    <property type="reaction ID" value="UER00135"/>
</dbReference>
<dbReference type="Proteomes" id="UP000001600">
    <property type="component" value="Chromosome 1"/>
</dbReference>
<dbReference type="GO" id="GO:0005829">
    <property type="term" value="C:cytosol"/>
    <property type="evidence" value="ECO:0007669"/>
    <property type="project" value="TreeGrafter"/>
</dbReference>
<dbReference type="GO" id="GO:0003937">
    <property type="term" value="F:IMP cyclohydrolase activity"/>
    <property type="evidence" value="ECO:0007669"/>
    <property type="project" value="UniProtKB-UniRule"/>
</dbReference>
<dbReference type="GO" id="GO:0004643">
    <property type="term" value="F:phosphoribosylaminoimidazolecarboxamide formyltransferase activity"/>
    <property type="evidence" value="ECO:0007669"/>
    <property type="project" value="UniProtKB-UniRule"/>
</dbReference>
<dbReference type="GO" id="GO:0006189">
    <property type="term" value="P:'de novo' IMP biosynthetic process"/>
    <property type="evidence" value="ECO:0007669"/>
    <property type="project" value="UniProtKB-UniRule"/>
</dbReference>
<dbReference type="CDD" id="cd01421">
    <property type="entry name" value="IMPCH"/>
    <property type="match status" value="1"/>
</dbReference>
<dbReference type="FunFam" id="3.40.140.20:FF:000001">
    <property type="entry name" value="Bifunctional purine biosynthesis protein PurH"/>
    <property type="match status" value="1"/>
</dbReference>
<dbReference type="FunFam" id="3.40.140.20:FF:000002">
    <property type="entry name" value="Bifunctional purine biosynthesis protein PurH"/>
    <property type="match status" value="1"/>
</dbReference>
<dbReference type="FunFam" id="3.40.50.1380:FF:000001">
    <property type="entry name" value="Bifunctional purine biosynthesis protein PurH"/>
    <property type="match status" value="1"/>
</dbReference>
<dbReference type="Gene3D" id="3.40.140.20">
    <property type="match status" value="2"/>
</dbReference>
<dbReference type="Gene3D" id="3.40.50.1380">
    <property type="entry name" value="Methylglyoxal synthase-like domain"/>
    <property type="match status" value="1"/>
</dbReference>
<dbReference type="HAMAP" id="MF_00139">
    <property type="entry name" value="PurH"/>
    <property type="match status" value="1"/>
</dbReference>
<dbReference type="InterPro" id="IPR024051">
    <property type="entry name" value="AICAR_Tfase_dup_dom_sf"/>
</dbReference>
<dbReference type="InterPro" id="IPR016193">
    <property type="entry name" value="Cytidine_deaminase-like"/>
</dbReference>
<dbReference type="InterPro" id="IPR011607">
    <property type="entry name" value="MGS-like_dom"/>
</dbReference>
<dbReference type="InterPro" id="IPR036914">
    <property type="entry name" value="MGS-like_dom_sf"/>
</dbReference>
<dbReference type="InterPro" id="IPR002695">
    <property type="entry name" value="PurH-like"/>
</dbReference>
<dbReference type="NCBIfam" id="NF002049">
    <property type="entry name" value="PRK00881.1"/>
    <property type="match status" value="1"/>
</dbReference>
<dbReference type="NCBIfam" id="TIGR00355">
    <property type="entry name" value="purH"/>
    <property type="match status" value="1"/>
</dbReference>
<dbReference type="PANTHER" id="PTHR11692:SF0">
    <property type="entry name" value="BIFUNCTIONAL PURINE BIOSYNTHESIS PROTEIN ATIC"/>
    <property type="match status" value="1"/>
</dbReference>
<dbReference type="PANTHER" id="PTHR11692">
    <property type="entry name" value="BIFUNCTIONAL PURINE BIOSYNTHESIS PROTEIN PURH"/>
    <property type="match status" value="1"/>
</dbReference>
<dbReference type="Pfam" id="PF01808">
    <property type="entry name" value="AICARFT_IMPCHas"/>
    <property type="match status" value="1"/>
</dbReference>
<dbReference type="Pfam" id="PF02142">
    <property type="entry name" value="MGS"/>
    <property type="match status" value="1"/>
</dbReference>
<dbReference type="PIRSF" id="PIRSF000414">
    <property type="entry name" value="AICARFT_IMPCHas"/>
    <property type="match status" value="1"/>
</dbReference>
<dbReference type="SMART" id="SM00798">
    <property type="entry name" value="AICARFT_IMPCHas"/>
    <property type="match status" value="1"/>
</dbReference>
<dbReference type="SMART" id="SM00851">
    <property type="entry name" value="MGS"/>
    <property type="match status" value="1"/>
</dbReference>
<dbReference type="SUPFAM" id="SSF53927">
    <property type="entry name" value="Cytidine deaminase-like"/>
    <property type="match status" value="1"/>
</dbReference>
<dbReference type="SUPFAM" id="SSF52335">
    <property type="entry name" value="Methylglyoxal synthase-like"/>
    <property type="match status" value="1"/>
</dbReference>
<dbReference type="PROSITE" id="PS51855">
    <property type="entry name" value="MGS"/>
    <property type="match status" value="1"/>
</dbReference>
<accession>B9JEU9</accession>
<protein>
    <recommendedName>
        <fullName evidence="1">Bifunctional purine biosynthesis protein PurH</fullName>
    </recommendedName>
    <domain>
        <recommendedName>
            <fullName evidence="1">Phosphoribosylaminoimidazolecarboxamide formyltransferase</fullName>
            <ecNumber evidence="1">2.1.2.3</ecNumber>
        </recommendedName>
        <alternativeName>
            <fullName evidence="1">AICAR transformylase</fullName>
        </alternativeName>
    </domain>
    <domain>
        <recommendedName>
            <fullName evidence="1">IMP cyclohydrolase</fullName>
            <ecNumber evidence="1">3.5.4.10</ecNumber>
        </recommendedName>
        <alternativeName>
            <fullName evidence="1">ATIC</fullName>
        </alternativeName>
        <alternativeName>
            <fullName evidence="1">IMP synthase</fullName>
        </alternativeName>
        <alternativeName>
            <fullName evidence="1">Inosinicase</fullName>
        </alternativeName>
    </domain>
</protein>
<sequence length="538" mass="57068">MAVVSKKIPAPDKVQVKTALLSVFDKTGIVELARALSEKGVRLLSTGGTHKAIAAAGLAVTDVSEVTAFPEIMDGRVKTLHPKVHGGLLAIRDDAEHQAAMKEHGIEGIDLAVINLYPFEDVRKAGGDYPTTVENIDIGGPAMIRASAKNHAYVTTLTDPADYSELLEQLSADAGQTTYDFRKRMAAKAFARTAAYDAMIANWFAEALDIATPRHRVIGGVLREEMRYGENPHQKAAFYVTGENRPGVSTATLLQGKQLSYNNINDTDAAYELVAEFLPENGPACAIIKHANPCGVATGPSLVEAYKRALACDSVSAFGGIIALNSILDAATAEEIVKLFTEVIIAPEVTEEAKAIIARKPNLRLLSVGALPDPRVAGLTAKTVSGGLLVQNRDNALVEDMELKVVTKRAPTAQELEDMKFAFRVAKHVKSNAVVYAKDGQTAGIGAGQMSRVDSARIAAIKAEEAAKAMGLAEPLTRGSAVASEAFLPFADGLLSAIAAGATAVIQPGGSMRDQEVIDAANEHNVAMVFTGIRHFRH</sequence>